<evidence type="ECO:0000250" key="1"/>
<evidence type="ECO:0000255" key="2">
    <source>
        <dbReference type="PROSITE-ProRule" id="PRU00159"/>
    </source>
</evidence>
<evidence type="ECO:0000255" key="3">
    <source>
        <dbReference type="PROSITE-ProRule" id="PRU10027"/>
    </source>
</evidence>
<evidence type="ECO:0000256" key="4">
    <source>
        <dbReference type="SAM" id="MobiDB-lite"/>
    </source>
</evidence>
<evidence type="ECO:0000269" key="5">
    <source>
    </source>
</evidence>
<evidence type="ECO:0000269" key="6">
    <source>
    </source>
</evidence>
<evidence type="ECO:0000305" key="7"/>
<sequence length="398" mass="44858">MDAGAQPPDTEMAEAGGGQQPPAAAAAAGAGAGAGMMENIQATLSHGGRFIQYNIFGNVFEVTAKYKPPILPIGKGAYGIVCSALNSETGEQVAIKKIANAFDNKIDAKRTLREIKLLRHMDHENIVAIRDIIPPPQRNSFNDVYIAYELMDTDLHQIIRSNQALSEEHCQYFLYQILRGLKYIHSANVLHRDLKPSNLLLNANCDLKICDFGLARTTSETDFMTEYVVTRWYRAPELLLNSSEYTAAIDVWSVGCIFMELMDRKPLFPGRDHVHQLRLLMELIGTPNEADLDFVNENARRYIRQLPRHARQSFPEKFPHVHPLAIDLVEKMLTFDPRQRITVEGALAHPYLASLHDISDEPVCSSPFSFDFEQHALSEEQMKDLIYQEGLAFNPDYQ</sequence>
<accession>Q84UI5</accession>
<accession>Q0DEG3</accession>
<feature type="chain" id="PRO_0000239744" description="Mitogen-activated protein kinase 1">
    <location>
        <begin position="1"/>
        <end position="398"/>
    </location>
</feature>
<feature type="domain" description="Protein kinase" evidence="2">
    <location>
        <begin position="67"/>
        <end position="352"/>
    </location>
</feature>
<feature type="region of interest" description="Disordered" evidence="4">
    <location>
        <begin position="1"/>
        <end position="26"/>
    </location>
</feature>
<feature type="short sequence motif" description="TXY">
    <location>
        <begin position="225"/>
        <end position="227"/>
    </location>
</feature>
<feature type="active site" description="Proton acceptor" evidence="2 3">
    <location>
        <position position="193"/>
    </location>
</feature>
<feature type="binding site" evidence="2">
    <location>
        <begin position="73"/>
        <end position="81"/>
    </location>
    <ligand>
        <name>ATP</name>
        <dbReference type="ChEBI" id="CHEBI:30616"/>
    </ligand>
</feature>
<feature type="binding site" evidence="2">
    <location>
        <position position="96"/>
    </location>
    <ligand>
        <name>ATP</name>
        <dbReference type="ChEBI" id="CHEBI:30616"/>
    </ligand>
</feature>
<feature type="modified residue" description="Phosphothreonine" evidence="1">
    <location>
        <position position="225"/>
    </location>
</feature>
<feature type="modified residue" description="Phosphotyrosine" evidence="1">
    <location>
        <position position="227"/>
    </location>
</feature>
<proteinExistence type="evidence at protein level"/>
<reference key="1">
    <citation type="journal article" date="2005" name="Plant Physiol.">
        <title>A sphingolipid elicitor-inducible mitogen-activated protein kinase is regulated by the small GTPase OsRac1 and heterotrimeric G-protein in rice.</title>
        <authorList>
            <person name="Lieberherr D."/>
            <person name="Thao N.P."/>
            <person name="Nakashima A."/>
            <person name="Umemura K."/>
            <person name="Kawasaki T."/>
            <person name="Shimamoto K."/>
        </authorList>
    </citation>
    <scope>NUCLEOTIDE SEQUENCE [MRNA]</scope>
    <scope>FUNCTION</scope>
    <scope>ACTIVITY REGULATION</scope>
    <scope>INTERACTION WITH RAC1</scope>
    <source>
        <strain>cv. Kinmaze</strain>
    </source>
</reference>
<reference key="2">
    <citation type="submission" date="2003-01" db="EMBL/GenBank/DDBJ databases">
        <title>Identification of a novel rice (Oryza sativa L. japonica-type cv. Nipponbare) mitogen-activated protein kinase OsSIPK, an orthologue of tobacco NtSIPK.</title>
        <authorList>
            <person name="Rakwal R."/>
            <person name="Jwa N.S."/>
            <person name="Shibato J."/>
            <person name="Iwahashi H."/>
        </authorList>
    </citation>
    <scope>NUCLEOTIDE SEQUENCE [MRNA]</scope>
    <source>
        <strain>cv. Nipponbare</strain>
        <tissue>Leaf</tissue>
    </source>
</reference>
<reference key="3">
    <citation type="journal article" date="2005" name="Nature">
        <title>The map-based sequence of the rice genome.</title>
        <authorList>
            <consortium name="International rice genome sequencing project (IRGSP)"/>
        </authorList>
    </citation>
    <scope>NUCLEOTIDE SEQUENCE [LARGE SCALE GENOMIC DNA]</scope>
    <source>
        <strain>cv. Nipponbare</strain>
    </source>
</reference>
<reference key="4">
    <citation type="journal article" date="2008" name="Nucleic Acids Res.">
        <title>The rice annotation project database (RAP-DB): 2008 update.</title>
        <authorList>
            <consortium name="The rice annotation project (RAP)"/>
        </authorList>
    </citation>
    <scope>GENOME REANNOTATION</scope>
    <source>
        <strain>cv. Nipponbare</strain>
    </source>
</reference>
<reference key="5">
    <citation type="journal article" date="2013" name="Rice">
        <title>Improvement of the Oryza sativa Nipponbare reference genome using next generation sequence and optical map data.</title>
        <authorList>
            <person name="Kawahara Y."/>
            <person name="de la Bastide M."/>
            <person name="Hamilton J.P."/>
            <person name="Kanamori H."/>
            <person name="McCombie W.R."/>
            <person name="Ouyang S."/>
            <person name="Schwartz D.C."/>
            <person name="Tanaka T."/>
            <person name="Wu J."/>
            <person name="Zhou S."/>
            <person name="Childs K.L."/>
            <person name="Davidson R.M."/>
            <person name="Lin H."/>
            <person name="Quesada-Ocampo L."/>
            <person name="Vaillancourt B."/>
            <person name="Sakai H."/>
            <person name="Lee S.S."/>
            <person name="Kim J."/>
            <person name="Numa H."/>
            <person name="Itoh T."/>
            <person name="Buell C.R."/>
            <person name="Matsumoto T."/>
        </authorList>
    </citation>
    <scope>GENOME REANNOTATION</scope>
    <source>
        <strain>cv. Nipponbare</strain>
    </source>
</reference>
<reference key="6">
    <citation type="journal article" date="2006" name="Mol. Plant Microbe Interact.">
        <title>Molecular analysis of the rice MAP kinase gene family in relation to Magnaporthe grisea infection.</title>
        <authorList>
            <person name="Reyna N.S."/>
            <person name="Yang Y."/>
        </authorList>
    </citation>
    <scope>NOMENCLATURE</scope>
</reference>
<reference key="7">
    <citation type="journal article" date="2014" name="Plant Cell Environ.">
        <title>OsDMI3-mediated activation of OsMPK1 regulates the activities of antioxidant enzymes in abscisic acid signalling in rice.</title>
        <authorList>
            <person name="Shi B."/>
            <person name="Ni L."/>
            <person name="Liu Y."/>
            <person name="Zhang A."/>
            <person name="Tan M."/>
            <person name="Jiang M."/>
        </authorList>
    </citation>
    <scope>FUNCTION</scope>
    <scope>INDUCTION</scope>
</reference>
<protein>
    <recommendedName>
        <fullName>Mitogen-activated protein kinase 1</fullName>
        <shortName>MAP kinase 1</shortName>
        <ecNumber>2.7.11.24</ecNumber>
    </recommendedName>
    <alternativeName>
        <fullName>MAP kinase 6</fullName>
    </alternativeName>
    <alternativeName>
        <fullName>OsMAPK6</fullName>
    </alternativeName>
    <alternativeName>
        <fullName>OsSIPK</fullName>
    </alternativeName>
</protein>
<dbReference type="EC" id="2.7.11.24"/>
<dbReference type="EMBL" id="AB183398">
    <property type="protein sequence ID" value="BAD34534.1"/>
    <property type="molecule type" value="mRNA"/>
</dbReference>
<dbReference type="EMBL" id="AJ535841">
    <property type="protein sequence ID" value="CAD59793.1"/>
    <property type="molecule type" value="mRNA"/>
</dbReference>
<dbReference type="EMBL" id="AP006533">
    <property type="protein sequence ID" value="BAD69291.1"/>
    <property type="molecule type" value="Genomic_DNA"/>
</dbReference>
<dbReference type="EMBL" id="AP008212">
    <property type="protein sequence ID" value="BAF18760.1"/>
    <property type="molecule type" value="Genomic_DNA"/>
</dbReference>
<dbReference type="EMBL" id="AP014962">
    <property type="protein sequence ID" value="BAS96224.1"/>
    <property type="molecule type" value="Genomic_DNA"/>
</dbReference>
<dbReference type="RefSeq" id="XP_015643193.1">
    <property type="nucleotide sequence ID" value="XM_015787707.1"/>
</dbReference>
<dbReference type="SMR" id="Q84UI5"/>
<dbReference type="FunCoup" id="Q84UI5">
    <property type="interactions" value="3098"/>
</dbReference>
<dbReference type="STRING" id="39947.Q84UI5"/>
<dbReference type="PaxDb" id="39947-Q84UI5"/>
<dbReference type="EnsemblPlants" id="Os06t0154500-01">
    <property type="protein sequence ID" value="Os06t0154500-01"/>
    <property type="gene ID" value="Os06g0154500"/>
</dbReference>
<dbReference type="Gramene" id="Os06t0154500-01">
    <property type="protein sequence ID" value="Os06t0154500-01"/>
    <property type="gene ID" value="Os06g0154500"/>
</dbReference>
<dbReference type="KEGG" id="dosa:Os06g0154500"/>
<dbReference type="eggNOG" id="KOG0660">
    <property type="taxonomic scope" value="Eukaryota"/>
</dbReference>
<dbReference type="HOGENOM" id="CLU_000288_181_1_1"/>
<dbReference type="InParanoid" id="Q84UI5"/>
<dbReference type="OMA" id="CYFLYQM"/>
<dbReference type="OrthoDB" id="192887at2759"/>
<dbReference type="PlantReactome" id="R-OSA-9631623">
    <property type="pathway name" value="Regulation of embryo development"/>
</dbReference>
<dbReference type="PlantReactome" id="R-OSA-9675508">
    <property type="pathway name" value="Root elongation"/>
</dbReference>
<dbReference type="Proteomes" id="UP000000763">
    <property type="component" value="Chromosome 6"/>
</dbReference>
<dbReference type="Proteomes" id="UP000059680">
    <property type="component" value="Chromosome 6"/>
</dbReference>
<dbReference type="GO" id="GO:0005737">
    <property type="term" value="C:cytoplasm"/>
    <property type="evidence" value="ECO:0000318"/>
    <property type="project" value="GO_Central"/>
</dbReference>
<dbReference type="GO" id="GO:0005634">
    <property type="term" value="C:nucleus"/>
    <property type="evidence" value="ECO:0000318"/>
    <property type="project" value="GO_Central"/>
</dbReference>
<dbReference type="GO" id="GO:0005524">
    <property type="term" value="F:ATP binding"/>
    <property type="evidence" value="ECO:0007669"/>
    <property type="project" value="UniProtKB-KW"/>
</dbReference>
<dbReference type="GO" id="GO:0004707">
    <property type="term" value="F:MAP kinase activity"/>
    <property type="evidence" value="ECO:0007669"/>
    <property type="project" value="UniProtKB-EC"/>
</dbReference>
<dbReference type="GO" id="GO:0106310">
    <property type="term" value="F:protein serine kinase activity"/>
    <property type="evidence" value="ECO:0007669"/>
    <property type="project" value="RHEA"/>
</dbReference>
<dbReference type="GO" id="GO:0004674">
    <property type="term" value="F:protein serine/threonine kinase activity"/>
    <property type="evidence" value="ECO:0000318"/>
    <property type="project" value="GO_Central"/>
</dbReference>
<dbReference type="GO" id="GO:0009738">
    <property type="term" value="P:abscisic acid-activated signaling pathway"/>
    <property type="evidence" value="ECO:0007669"/>
    <property type="project" value="UniProtKB-KW"/>
</dbReference>
<dbReference type="GO" id="GO:0006952">
    <property type="term" value="P:defense response"/>
    <property type="evidence" value="ECO:0007669"/>
    <property type="project" value="UniProtKB-KW"/>
</dbReference>
<dbReference type="GO" id="GO:0035556">
    <property type="term" value="P:intracellular signal transduction"/>
    <property type="evidence" value="ECO:0000318"/>
    <property type="project" value="GO_Central"/>
</dbReference>
<dbReference type="CDD" id="cd07858">
    <property type="entry name" value="STKc_TEY_MAPK"/>
    <property type="match status" value="1"/>
</dbReference>
<dbReference type="FunFam" id="1.10.510.10:FF:000013">
    <property type="entry name" value="Mitogen-activated protein kinase"/>
    <property type="match status" value="1"/>
</dbReference>
<dbReference type="FunFam" id="3.30.200.20:FF:000046">
    <property type="entry name" value="Mitogen-activated protein kinase"/>
    <property type="match status" value="1"/>
</dbReference>
<dbReference type="Gene3D" id="3.30.200.20">
    <property type="entry name" value="Phosphorylase Kinase, domain 1"/>
    <property type="match status" value="1"/>
</dbReference>
<dbReference type="Gene3D" id="1.10.510.10">
    <property type="entry name" value="Transferase(Phosphotransferase) domain 1"/>
    <property type="match status" value="1"/>
</dbReference>
<dbReference type="InterPro" id="IPR011009">
    <property type="entry name" value="Kinase-like_dom_sf"/>
</dbReference>
<dbReference type="InterPro" id="IPR050117">
    <property type="entry name" value="MAP_kinase"/>
</dbReference>
<dbReference type="InterPro" id="IPR003527">
    <property type="entry name" value="MAP_kinase_CS"/>
</dbReference>
<dbReference type="InterPro" id="IPR000719">
    <property type="entry name" value="Prot_kinase_dom"/>
</dbReference>
<dbReference type="InterPro" id="IPR017441">
    <property type="entry name" value="Protein_kinase_ATP_BS"/>
</dbReference>
<dbReference type="InterPro" id="IPR008271">
    <property type="entry name" value="Ser/Thr_kinase_AS"/>
</dbReference>
<dbReference type="PANTHER" id="PTHR24055">
    <property type="entry name" value="MITOGEN-ACTIVATED PROTEIN KINASE"/>
    <property type="match status" value="1"/>
</dbReference>
<dbReference type="Pfam" id="PF00069">
    <property type="entry name" value="Pkinase"/>
    <property type="match status" value="1"/>
</dbReference>
<dbReference type="SMART" id="SM00220">
    <property type="entry name" value="S_TKc"/>
    <property type="match status" value="1"/>
</dbReference>
<dbReference type="SUPFAM" id="SSF56112">
    <property type="entry name" value="Protein kinase-like (PK-like)"/>
    <property type="match status" value="1"/>
</dbReference>
<dbReference type="PROSITE" id="PS01351">
    <property type="entry name" value="MAPK"/>
    <property type="match status" value="1"/>
</dbReference>
<dbReference type="PROSITE" id="PS00107">
    <property type="entry name" value="PROTEIN_KINASE_ATP"/>
    <property type="match status" value="1"/>
</dbReference>
<dbReference type="PROSITE" id="PS50011">
    <property type="entry name" value="PROTEIN_KINASE_DOM"/>
    <property type="match status" value="1"/>
</dbReference>
<dbReference type="PROSITE" id="PS00108">
    <property type="entry name" value="PROTEIN_KINASE_ST"/>
    <property type="match status" value="1"/>
</dbReference>
<name>MPK1_ORYSJ</name>
<organism>
    <name type="scientific">Oryza sativa subsp. japonica</name>
    <name type="common">Rice</name>
    <dbReference type="NCBI Taxonomy" id="39947"/>
    <lineage>
        <taxon>Eukaryota</taxon>
        <taxon>Viridiplantae</taxon>
        <taxon>Streptophyta</taxon>
        <taxon>Embryophyta</taxon>
        <taxon>Tracheophyta</taxon>
        <taxon>Spermatophyta</taxon>
        <taxon>Magnoliopsida</taxon>
        <taxon>Liliopsida</taxon>
        <taxon>Poales</taxon>
        <taxon>Poaceae</taxon>
        <taxon>BOP clade</taxon>
        <taxon>Oryzoideae</taxon>
        <taxon>Oryzeae</taxon>
        <taxon>Oryzinae</taxon>
        <taxon>Oryza</taxon>
        <taxon>Oryza sativa</taxon>
    </lineage>
</organism>
<gene>
    <name type="primary">MPK1</name>
    <name type="synonym">MAPK6</name>
    <name type="synonym">SIPK</name>
    <name type="ordered locus">Os06g0154500</name>
    <name type="ordered locus">LOC_Os06g06090</name>
    <name type="ORF">OSJNBa0085L11.14</name>
</gene>
<keyword id="KW-0938">Abscisic acid signaling pathway</keyword>
<keyword id="KW-0067">ATP-binding</keyword>
<keyword id="KW-0418">Kinase</keyword>
<keyword id="KW-0547">Nucleotide-binding</keyword>
<keyword id="KW-0597">Phosphoprotein</keyword>
<keyword id="KW-0611">Plant defense</keyword>
<keyword id="KW-1185">Reference proteome</keyword>
<keyword id="KW-0723">Serine/threonine-protein kinase</keyword>
<keyword id="KW-0808">Transferase</keyword>
<comment type="function">
    <text evidence="5 6">Involved in sphingolipid elicitor (SE)-dependent defense signaling pathway. Acts downstream of heterotrimeric G protein alpha subunit and small GTPase RAC1. May regulate the expression of various genes involved in biotic and abiotic stress response (PubMed:15951489). Involved in an abscisic acid signaling pathway that regulates the activities of antioxidant enzymes and the production of hydrogen peroxide. Acts downstream of CCAMK (PubMed:23777258).</text>
</comment>
<comment type="catalytic activity">
    <reaction>
        <text>L-seryl-[protein] + ATP = O-phospho-L-seryl-[protein] + ADP + H(+)</text>
        <dbReference type="Rhea" id="RHEA:17989"/>
        <dbReference type="Rhea" id="RHEA-COMP:9863"/>
        <dbReference type="Rhea" id="RHEA-COMP:11604"/>
        <dbReference type="ChEBI" id="CHEBI:15378"/>
        <dbReference type="ChEBI" id="CHEBI:29999"/>
        <dbReference type="ChEBI" id="CHEBI:30616"/>
        <dbReference type="ChEBI" id="CHEBI:83421"/>
        <dbReference type="ChEBI" id="CHEBI:456216"/>
        <dbReference type="EC" id="2.7.11.24"/>
    </reaction>
</comment>
<comment type="catalytic activity">
    <reaction>
        <text>L-threonyl-[protein] + ATP = O-phospho-L-threonyl-[protein] + ADP + H(+)</text>
        <dbReference type="Rhea" id="RHEA:46608"/>
        <dbReference type="Rhea" id="RHEA-COMP:11060"/>
        <dbReference type="Rhea" id="RHEA-COMP:11605"/>
        <dbReference type="ChEBI" id="CHEBI:15378"/>
        <dbReference type="ChEBI" id="CHEBI:30013"/>
        <dbReference type="ChEBI" id="CHEBI:30616"/>
        <dbReference type="ChEBI" id="CHEBI:61977"/>
        <dbReference type="ChEBI" id="CHEBI:456216"/>
        <dbReference type="EC" id="2.7.11.24"/>
    </reaction>
</comment>
<comment type="activity regulation">
    <text evidence="1 5">Activated by threonine and tyrosine phosphorylation (By similarity). Activated in response to sphingolipid elicitor (SE).</text>
</comment>
<comment type="subunit">
    <text>May interact with RAC1.</text>
</comment>
<comment type="induction">
    <text evidence="6">Induced by hydrogen peroxide and abscisic acid (ABA).</text>
</comment>
<comment type="domain">
    <text>The TXY motif contains the threonine and tyrosine residues whose phosphorylation activates the MAP kinases.</text>
</comment>
<comment type="PTM">
    <text evidence="1">Dually phosphorylated on Thr-225 and Tyr-227, which activates the enzyme.</text>
</comment>
<comment type="similarity">
    <text evidence="7">Belongs to the protein kinase superfamily. CMGC Ser/Thr protein kinase family. MAP kinase subfamily.</text>
</comment>